<feature type="chain" id="PRO_1000117565" description="Deoxyuridine 5'-triphosphate nucleotidohydrolase">
    <location>
        <begin position="1"/>
        <end position="151"/>
    </location>
</feature>
<feature type="binding site" evidence="1">
    <location>
        <begin position="70"/>
        <end position="72"/>
    </location>
    <ligand>
        <name>substrate</name>
    </ligand>
</feature>
<feature type="binding site" evidence="1">
    <location>
        <position position="83"/>
    </location>
    <ligand>
        <name>substrate</name>
    </ligand>
</feature>
<feature type="binding site" evidence="1">
    <location>
        <begin position="87"/>
        <end position="89"/>
    </location>
    <ligand>
        <name>substrate</name>
    </ligand>
</feature>
<feature type="binding site" evidence="1">
    <location>
        <position position="97"/>
    </location>
    <ligand>
        <name>substrate</name>
    </ligand>
</feature>
<name>DUT_ECO7I</name>
<sequence length="151" mass="16138">MKKIDVKILDPRVGKEFPLPTYATSGSAGLDLRACLDDAVELAPGDTTLVPTGLAIHIADPSLAAMMLPRSGLGHKHGIVLGNLVGLIDSDYQGQLMISVWNRGQDSFTIQPGERIAQIIFVPVVQAEFNLVEDFDATDRGEGGFGHSGRQ</sequence>
<dbReference type="EC" id="3.6.1.23" evidence="1"/>
<dbReference type="EMBL" id="CU928164">
    <property type="protein sequence ID" value="CAR20266.1"/>
    <property type="molecule type" value="Genomic_DNA"/>
</dbReference>
<dbReference type="RefSeq" id="YP_002410035.1">
    <property type="nucleotide sequence ID" value="NC_011750.1"/>
</dbReference>
<dbReference type="SMR" id="B7NQ01"/>
<dbReference type="STRING" id="585057.ECIAI39_4158"/>
<dbReference type="KEGG" id="ect:ECIAI39_4158"/>
<dbReference type="PATRIC" id="fig|585057.6.peg.4309"/>
<dbReference type="HOGENOM" id="CLU_068508_1_1_6"/>
<dbReference type="UniPathway" id="UPA00610">
    <property type="reaction ID" value="UER00666"/>
</dbReference>
<dbReference type="Proteomes" id="UP000000749">
    <property type="component" value="Chromosome"/>
</dbReference>
<dbReference type="GO" id="GO:0004170">
    <property type="term" value="F:dUTP diphosphatase activity"/>
    <property type="evidence" value="ECO:0007669"/>
    <property type="project" value="UniProtKB-UniRule"/>
</dbReference>
<dbReference type="GO" id="GO:0000287">
    <property type="term" value="F:magnesium ion binding"/>
    <property type="evidence" value="ECO:0007669"/>
    <property type="project" value="UniProtKB-UniRule"/>
</dbReference>
<dbReference type="GO" id="GO:0006226">
    <property type="term" value="P:dUMP biosynthetic process"/>
    <property type="evidence" value="ECO:0007669"/>
    <property type="project" value="UniProtKB-UniRule"/>
</dbReference>
<dbReference type="GO" id="GO:0046081">
    <property type="term" value="P:dUTP catabolic process"/>
    <property type="evidence" value="ECO:0007669"/>
    <property type="project" value="InterPro"/>
</dbReference>
<dbReference type="CDD" id="cd07557">
    <property type="entry name" value="trimeric_dUTPase"/>
    <property type="match status" value="1"/>
</dbReference>
<dbReference type="FunFam" id="2.70.40.10:FF:000002">
    <property type="entry name" value="dUTP diphosphatase"/>
    <property type="match status" value="1"/>
</dbReference>
<dbReference type="Gene3D" id="2.70.40.10">
    <property type="match status" value="1"/>
</dbReference>
<dbReference type="HAMAP" id="MF_00116">
    <property type="entry name" value="dUTPase_bact"/>
    <property type="match status" value="1"/>
</dbReference>
<dbReference type="InterPro" id="IPR008181">
    <property type="entry name" value="dUTPase"/>
</dbReference>
<dbReference type="InterPro" id="IPR029054">
    <property type="entry name" value="dUTPase-like"/>
</dbReference>
<dbReference type="InterPro" id="IPR036157">
    <property type="entry name" value="dUTPase-like_sf"/>
</dbReference>
<dbReference type="InterPro" id="IPR033704">
    <property type="entry name" value="dUTPase_trimeric"/>
</dbReference>
<dbReference type="NCBIfam" id="TIGR00576">
    <property type="entry name" value="dut"/>
    <property type="match status" value="1"/>
</dbReference>
<dbReference type="NCBIfam" id="NF001862">
    <property type="entry name" value="PRK00601.1"/>
    <property type="match status" value="1"/>
</dbReference>
<dbReference type="PANTHER" id="PTHR11241">
    <property type="entry name" value="DEOXYURIDINE 5'-TRIPHOSPHATE NUCLEOTIDOHYDROLASE"/>
    <property type="match status" value="1"/>
</dbReference>
<dbReference type="PANTHER" id="PTHR11241:SF0">
    <property type="entry name" value="DEOXYURIDINE 5'-TRIPHOSPHATE NUCLEOTIDOHYDROLASE"/>
    <property type="match status" value="1"/>
</dbReference>
<dbReference type="Pfam" id="PF00692">
    <property type="entry name" value="dUTPase"/>
    <property type="match status" value="1"/>
</dbReference>
<dbReference type="SUPFAM" id="SSF51283">
    <property type="entry name" value="dUTPase-like"/>
    <property type="match status" value="1"/>
</dbReference>
<accession>B7NQ01</accession>
<keyword id="KW-0378">Hydrolase</keyword>
<keyword id="KW-0460">Magnesium</keyword>
<keyword id="KW-0479">Metal-binding</keyword>
<keyword id="KW-0546">Nucleotide metabolism</keyword>
<reference key="1">
    <citation type="journal article" date="2009" name="PLoS Genet.">
        <title>Organised genome dynamics in the Escherichia coli species results in highly diverse adaptive paths.</title>
        <authorList>
            <person name="Touchon M."/>
            <person name="Hoede C."/>
            <person name="Tenaillon O."/>
            <person name="Barbe V."/>
            <person name="Baeriswyl S."/>
            <person name="Bidet P."/>
            <person name="Bingen E."/>
            <person name="Bonacorsi S."/>
            <person name="Bouchier C."/>
            <person name="Bouvet O."/>
            <person name="Calteau A."/>
            <person name="Chiapello H."/>
            <person name="Clermont O."/>
            <person name="Cruveiller S."/>
            <person name="Danchin A."/>
            <person name="Diard M."/>
            <person name="Dossat C."/>
            <person name="Karoui M.E."/>
            <person name="Frapy E."/>
            <person name="Garry L."/>
            <person name="Ghigo J.M."/>
            <person name="Gilles A.M."/>
            <person name="Johnson J."/>
            <person name="Le Bouguenec C."/>
            <person name="Lescat M."/>
            <person name="Mangenot S."/>
            <person name="Martinez-Jehanne V."/>
            <person name="Matic I."/>
            <person name="Nassif X."/>
            <person name="Oztas S."/>
            <person name="Petit M.A."/>
            <person name="Pichon C."/>
            <person name="Rouy Z."/>
            <person name="Ruf C.S."/>
            <person name="Schneider D."/>
            <person name="Tourret J."/>
            <person name="Vacherie B."/>
            <person name="Vallenet D."/>
            <person name="Medigue C."/>
            <person name="Rocha E.P.C."/>
            <person name="Denamur E."/>
        </authorList>
    </citation>
    <scope>NUCLEOTIDE SEQUENCE [LARGE SCALE GENOMIC DNA]</scope>
    <source>
        <strain>IAI39 / ExPEC</strain>
    </source>
</reference>
<comment type="function">
    <text evidence="1">This enzyme is involved in nucleotide metabolism: it produces dUMP, the immediate precursor of thymidine nucleotides and it decreases the intracellular concentration of dUTP so that uracil cannot be incorporated into DNA.</text>
</comment>
<comment type="catalytic activity">
    <reaction evidence="1">
        <text>dUTP + H2O = dUMP + diphosphate + H(+)</text>
        <dbReference type="Rhea" id="RHEA:10248"/>
        <dbReference type="ChEBI" id="CHEBI:15377"/>
        <dbReference type="ChEBI" id="CHEBI:15378"/>
        <dbReference type="ChEBI" id="CHEBI:33019"/>
        <dbReference type="ChEBI" id="CHEBI:61555"/>
        <dbReference type="ChEBI" id="CHEBI:246422"/>
        <dbReference type="EC" id="3.6.1.23"/>
    </reaction>
</comment>
<comment type="cofactor">
    <cofactor evidence="1">
        <name>Mg(2+)</name>
        <dbReference type="ChEBI" id="CHEBI:18420"/>
    </cofactor>
</comment>
<comment type="pathway">
    <text evidence="1">Pyrimidine metabolism; dUMP biosynthesis; dUMP from dCTP (dUTP route): step 2/2.</text>
</comment>
<comment type="subunit">
    <text evidence="1">Homotrimer.</text>
</comment>
<comment type="similarity">
    <text evidence="1">Belongs to the dUTPase family.</text>
</comment>
<organism>
    <name type="scientific">Escherichia coli O7:K1 (strain IAI39 / ExPEC)</name>
    <dbReference type="NCBI Taxonomy" id="585057"/>
    <lineage>
        <taxon>Bacteria</taxon>
        <taxon>Pseudomonadati</taxon>
        <taxon>Pseudomonadota</taxon>
        <taxon>Gammaproteobacteria</taxon>
        <taxon>Enterobacterales</taxon>
        <taxon>Enterobacteriaceae</taxon>
        <taxon>Escherichia</taxon>
    </lineage>
</organism>
<gene>
    <name evidence="1" type="primary">dut</name>
    <name type="ordered locus">ECIAI39_4158</name>
</gene>
<evidence type="ECO:0000255" key="1">
    <source>
        <dbReference type="HAMAP-Rule" id="MF_00116"/>
    </source>
</evidence>
<proteinExistence type="inferred from homology"/>
<protein>
    <recommendedName>
        <fullName evidence="1">Deoxyuridine 5'-triphosphate nucleotidohydrolase</fullName>
        <shortName evidence="1">dUTPase</shortName>
        <ecNumber evidence="1">3.6.1.23</ecNumber>
    </recommendedName>
    <alternativeName>
        <fullName evidence="1">dUTP pyrophosphatase</fullName>
    </alternativeName>
</protein>